<gene>
    <name type="ordered locus">DR_2469</name>
</gene>
<reference key="1">
    <citation type="journal article" date="1999" name="Science">
        <title>Genome sequence of the radioresistant bacterium Deinococcus radiodurans R1.</title>
        <authorList>
            <person name="White O."/>
            <person name="Eisen J.A."/>
            <person name="Heidelberg J.F."/>
            <person name="Hickey E.K."/>
            <person name="Peterson J.D."/>
            <person name="Dodson R.J."/>
            <person name="Haft D.H."/>
            <person name="Gwinn M.L."/>
            <person name="Nelson W.C."/>
            <person name="Richardson D.L."/>
            <person name="Moffat K.S."/>
            <person name="Qin H."/>
            <person name="Jiang L."/>
            <person name="Pamphile W."/>
            <person name="Crosby M."/>
            <person name="Shen M."/>
            <person name="Vamathevan J.J."/>
            <person name="Lam P."/>
            <person name="McDonald L.A."/>
            <person name="Utterback T.R."/>
            <person name="Zalewski C."/>
            <person name="Makarova K.S."/>
            <person name="Aravind L."/>
            <person name="Daly M.J."/>
            <person name="Minton K.W."/>
            <person name="Fleischmann R.D."/>
            <person name="Ketchum K.A."/>
            <person name="Nelson K.E."/>
            <person name="Salzberg S.L."/>
            <person name="Smith H.O."/>
            <person name="Venter J.C."/>
            <person name="Fraser C.M."/>
        </authorList>
    </citation>
    <scope>NUCLEOTIDE SEQUENCE [LARGE SCALE GENOMIC DNA]</scope>
    <source>
        <strain>ATCC 13939 / DSM 20539 / JCM 16871 / CCUG 27074 / LMG 4051 / NBRC 15346 / NCIMB 9279 / VKM B-1422 / R1</strain>
    </source>
</reference>
<feature type="chain" id="PRO_0000092005" description="Putative ABC transporter ATP-binding protein DR_2469">
    <location>
        <begin position="1"/>
        <end position="226"/>
    </location>
</feature>
<feature type="domain" description="ABC transporter" evidence="2">
    <location>
        <begin position="2"/>
        <end position="225"/>
    </location>
</feature>
<feature type="binding site" evidence="2">
    <location>
        <begin position="33"/>
        <end position="40"/>
    </location>
    <ligand>
        <name>ATP</name>
        <dbReference type="ChEBI" id="CHEBI:30616"/>
    </ligand>
</feature>
<accession>Q9RRL9</accession>
<name>Y2469_DEIRA</name>
<sequence>MIELRHVSHHYDERPVLRPLSLTLRERRIGVVGSNGSGKSTFARLLNALLLPAAGQVLVDGLDTRQDPKGVRRKVGFVFQNPDHQIVFPVVEEDLAFGLKNLKLPPAEVEARIGEVLERYDLGEYRQHPSHLLSGGQKQLLAISGVLVMRPEYVVFDEPTTLLDLRNRNRVAAAIRELPQTAIVVTHDLDLLRDFERVLVFEAGELIADAPPAEALRVYRERMTWP</sequence>
<evidence type="ECO:0000250" key="1"/>
<evidence type="ECO:0000255" key="2">
    <source>
        <dbReference type="PROSITE-ProRule" id="PRU00434"/>
    </source>
</evidence>
<evidence type="ECO:0000305" key="3"/>
<comment type="function">
    <text evidence="1">Probably part of an ABC transporter complex. Responsible for energy coupling to the transport system (By similarity).</text>
</comment>
<comment type="subcellular location">
    <subcellularLocation>
        <location evidence="1">Cell membrane</location>
        <topology evidence="1">Peripheral membrane protein</topology>
    </subcellularLocation>
</comment>
<comment type="similarity">
    <text evidence="3">Belongs to the ABC transporter superfamily.</text>
</comment>
<dbReference type="EC" id="7.-.-.-"/>
<dbReference type="EMBL" id="AE000513">
    <property type="protein sequence ID" value="AAF12012.1"/>
    <property type="molecule type" value="Genomic_DNA"/>
</dbReference>
<dbReference type="PIR" id="B75270">
    <property type="entry name" value="B75270"/>
</dbReference>
<dbReference type="RefSeq" id="NP_296189.1">
    <property type="nucleotide sequence ID" value="NC_001263.1"/>
</dbReference>
<dbReference type="RefSeq" id="WP_010889094.1">
    <property type="nucleotide sequence ID" value="NC_001263.1"/>
</dbReference>
<dbReference type="SMR" id="Q9RRL9"/>
<dbReference type="FunCoup" id="Q9RRL9">
    <property type="interactions" value="274"/>
</dbReference>
<dbReference type="STRING" id="243230.DR_2469"/>
<dbReference type="PaxDb" id="243230-DR_2469"/>
<dbReference type="EnsemblBacteria" id="AAF12012">
    <property type="protein sequence ID" value="AAF12012"/>
    <property type="gene ID" value="DR_2469"/>
</dbReference>
<dbReference type="GeneID" id="69518722"/>
<dbReference type="KEGG" id="dra:DR_2469"/>
<dbReference type="PATRIC" id="fig|243230.17.peg.2705"/>
<dbReference type="eggNOG" id="COG1122">
    <property type="taxonomic scope" value="Bacteria"/>
</dbReference>
<dbReference type="HOGENOM" id="CLU_000604_1_22_0"/>
<dbReference type="InParanoid" id="Q9RRL9"/>
<dbReference type="OrthoDB" id="9784332at2"/>
<dbReference type="Proteomes" id="UP000002524">
    <property type="component" value="Chromosome 1"/>
</dbReference>
<dbReference type="GO" id="GO:0043190">
    <property type="term" value="C:ATP-binding cassette (ABC) transporter complex"/>
    <property type="evidence" value="ECO:0000318"/>
    <property type="project" value="GO_Central"/>
</dbReference>
<dbReference type="GO" id="GO:0005524">
    <property type="term" value="F:ATP binding"/>
    <property type="evidence" value="ECO:0000318"/>
    <property type="project" value="GO_Central"/>
</dbReference>
<dbReference type="GO" id="GO:0016887">
    <property type="term" value="F:ATP hydrolysis activity"/>
    <property type="evidence" value="ECO:0007669"/>
    <property type="project" value="InterPro"/>
</dbReference>
<dbReference type="GO" id="GO:0042626">
    <property type="term" value="F:ATPase-coupled transmembrane transporter activity"/>
    <property type="evidence" value="ECO:0000318"/>
    <property type="project" value="GO_Central"/>
</dbReference>
<dbReference type="CDD" id="cd03225">
    <property type="entry name" value="ABC_cobalt_CbiO_domain1"/>
    <property type="match status" value="1"/>
</dbReference>
<dbReference type="Gene3D" id="3.40.50.300">
    <property type="entry name" value="P-loop containing nucleotide triphosphate hydrolases"/>
    <property type="match status" value="1"/>
</dbReference>
<dbReference type="InterPro" id="IPR003593">
    <property type="entry name" value="AAA+_ATPase"/>
</dbReference>
<dbReference type="InterPro" id="IPR003439">
    <property type="entry name" value="ABC_transporter-like_ATP-bd"/>
</dbReference>
<dbReference type="InterPro" id="IPR017871">
    <property type="entry name" value="ABC_transporter-like_CS"/>
</dbReference>
<dbReference type="InterPro" id="IPR015856">
    <property type="entry name" value="ABC_transpr_CbiO/EcfA_su"/>
</dbReference>
<dbReference type="InterPro" id="IPR050095">
    <property type="entry name" value="ECF_ABC_transporter_ATP-bd"/>
</dbReference>
<dbReference type="InterPro" id="IPR027417">
    <property type="entry name" value="P-loop_NTPase"/>
</dbReference>
<dbReference type="PANTHER" id="PTHR43553:SF24">
    <property type="entry name" value="ENERGY-COUPLING FACTOR TRANSPORTER ATP-BINDING PROTEIN ECFA1"/>
    <property type="match status" value="1"/>
</dbReference>
<dbReference type="PANTHER" id="PTHR43553">
    <property type="entry name" value="HEAVY METAL TRANSPORTER"/>
    <property type="match status" value="1"/>
</dbReference>
<dbReference type="Pfam" id="PF00005">
    <property type="entry name" value="ABC_tran"/>
    <property type="match status" value="1"/>
</dbReference>
<dbReference type="SMART" id="SM00382">
    <property type="entry name" value="AAA"/>
    <property type="match status" value="1"/>
</dbReference>
<dbReference type="SUPFAM" id="SSF52540">
    <property type="entry name" value="P-loop containing nucleoside triphosphate hydrolases"/>
    <property type="match status" value="1"/>
</dbReference>
<dbReference type="PROSITE" id="PS00211">
    <property type="entry name" value="ABC_TRANSPORTER_1"/>
    <property type="match status" value="1"/>
</dbReference>
<dbReference type="PROSITE" id="PS50893">
    <property type="entry name" value="ABC_TRANSPORTER_2"/>
    <property type="match status" value="1"/>
</dbReference>
<keyword id="KW-0067">ATP-binding</keyword>
<keyword id="KW-1003">Cell membrane</keyword>
<keyword id="KW-0472">Membrane</keyword>
<keyword id="KW-0547">Nucleotide-binding</keyword>
<keyword id="KW-1185">Reference proteome</keyword>
<keyword id="KW-1278">Translocase</keyword>
<keyword id="KW-0813">Transport</keyword>
<organism>
    <name type="scientific">Deinococcus radiodurans (strain ATCC 13939 / DSM 20539 / JCM 16871 / CCUG 27074 / LMG 4051 / NBRC 15346 / NCIMB 9279 / VKM B-1422 / R1)</name>
    <dbReference type="NCBI Taxonomy" id="243230"/>
    <lineage>
        <taxon>Bacteria</taxon>
        <taxon>Thermotogati</taxon>
        <taxon>Deinococcota</taxon>
        <taxon>Deinococci</taxon>
        <taxon>Deinococcales</taxon>
        <taxon>Deinococcaceae</taxon>
        <taxon>Deinococcus</taxon>
    </lineage>
</organism>
<proteinExistence type="inferred from homology"/>
<protein>
    <recommendedName>
        <fullName>Putative ABC transporter ATP-binding protein DR_2469</fullName>
        <ecNumber>7.-.-.-</ecNumber>
    </recommendedName>
</protein>